<protein>
    <recommendedName>
        <fullName evidence="1">Glycerol kinase</fullName>
        <ecNumber evidence="1">2.7.1.30</ecNumber>
    </recommendedName>
    <alternativeName>
        <fullName evidence="1">ATP:glycerol 3-phosphotransferase</fullName>
    </alternativeName>
    <alternativeName>
        <fullName evidence="1">Glycerokinase</fullName>
        <shortName evidence="1">GK</shortName>
    </alternativeName>
</protein>
<proteinExistence type="inferred from homology"/>
<dbReference type="EC" id="2.7.1.30" evidence="1"/>
<dbReference type="EMBL" id="AY596297">
    <property type="protein sequence ID" value="AAV45568.1"/>
    <property type="molecule type" value="Genomic_DNA"/>
</dbReference>
<dbReference type="RefSeq" id="WP_011223083.1">
    <property type="nucleotide sequence ID" value="NC_006396.1"/>
</dbReference>
<dbReference type="SMR" id="Q5V4I4"/>
<dbReference type="STRING" id="272569.rrnAC0550"/>
<dbReference type="PaxDb" id="272569-rrnAC0550"/>
<dbReference type="EnsemblBacteria" id="AAV45568">
    <property type="protein sequence ID" value="AAV45568"/>
    <property type="gene ID" value="rrnAC0550"/>
</dbReference>
<dbReference type="GeneID" id="40151607"/>
<dbReference type="KEGG" id="hma:rrnAC0550"/>
<dbReference type="PATRIC" id="fig|272569.17.peg.1315"/>
<dbReference type="eggNOG" id="arCOG00024">
    <property type="taxonomic scope" value="Archaea"/>
</dbReference>
<dbReference type="HOGENOM" id="CLU_009281_2_3_2"/>
<dbReference type="UniPathway" id="UPA00618">
    <property type="reaction ID" value="UER00672"/>
</dbReference>
<dbReference type="Proteomes" id="UP000001169">
    <property type="component" value="Chromosome I"/>
</dbReference>
<dbReference type="GO" id="GO:0005829">
    <property type="term" value="C:cytosol"/>
    <property type="evidence" value="ECO:0007669"/>
    <property type="project" value="TreeGrafter"/>
</dbReference>
<dbReference type="GO" id="GO:0005524">
    <property type="term" value="F:ATP binding"/>
    <property type="evidence" value="ECO:0007669"/>
    <property type="project" value="UniProtKB-UniRule"/>
</dbReference>
<dbReference type="GO" id="GO:0004370">
    <property type="term" value="F:glycerol kinase activity"/>
    <property type="evidence" value="ECO:0000250"/>
    <property type="project" value="UniProtKB"/>
</dbReference>
<dbReference type="GO" id="GO:0019563">
    <property type="term" value="P:glycerol catabolic process"/>
    <property type="evidence" value="ECO:0007669"/>
    <property type="project" value="UniProtKB-UniRule"/>
</dbReference>
<dbReference type="GO" id="GO:0006071">
    <property type="term" value="P:glycerol metabolic process"/>
    <property type="evidence" value="ECO:0000250"/>
    <property type="project" value="UniProtKB"/>
</dbReference>
<dbReference type="GO" id="GO:0006072">
    <property type="term" value="P:glycerol-3-phosphate metabolic process"/>
    <property type="evidence" value="ECO:0007669"/>
    <property type="project" value="InterPro"/>
</dbReference>
<dbReference type="CDD" id="cd07769">
    <property type="entry name" value="ASKHA_NBD_FGGY_GK"/>
    <property type="match status" value="1"/>
</dbReference>
<dbReference type="FunFam" id="3.30.420.40:FF:000007">
    <property type="entry name" value="Glycerol kinase"/>
    <property type="match status" value="1"/>
</dbReference>
<dbReference type="FunFam" id="3.30.420.40:FF:000008">
    <property type="entry name" value="Glycerol kinase"/>
    <property type="match status" value="1"/>
</dbReference>
<dbReference type="Gene3D" id="3.30.420.40">
    <property type="match status" value="2"/>
</dbReference>
<dbReference type="HAMAP" id="MF_00186">
    <property type="entry name" value="Glycerol_kin"/>
    <property type="match status" value="1"/>
</dbReference>
<dbReference type="InterPro" id="IPR043129">
    <property type="entry name" value="ATPase_NBD"/>
</dbReference>
<dbReference type="InterPro" id="IPR000577">
    <property type="entry name" value="Carb_kinase_FGGY"/>
</dbReference>
<dbReference type="InterPro" id="IPR018483">
    <property type="entry name" value="Carb_kinase_FGGY_CS"/>
</dbReference>
<dbReference type="InterPro" id="IPR018485">
    <property type="entry name" value="FGGY_C"/>
</dbReference>
<dbReference type="InterPro" id="IPR018484">
    <property type="entry name" value="FGGY_N"/>
</dbReference>
<dbReference type="InterPro" id="IPR005999">
    <property type="entry name" value="Glycerol_kin"/>
</dbReference>
<dbReference type="NCBIfam" id="TIGR01311">
    <property type="entry name" value="glycerol_kin"/>
    <property type="match status" value="1"/>
</dbReference>
<dbReference type="NCBIfam" id="NF000756">
    <property type="entry name" value="PRK00047.1"/>
    <property type="match status" value="1"/>
</dbReference>
<dbReference type="PANTHER" id="PTHR10196:SF69">
    <property type="entry name" value="GLYCEROL KINASE"/>
    <property type="match status" value="1"/>
</dbReference>
<dbReference type="PANTHER" id="PTHR10196">
    <property type="entry name" value="SUGAR KINASE"/>
    <property type="match status" value="1"/>
</dbReference>
<dbReference type="Pfam" id="PF02782">
    <property type="entry name" value="FGGY_C"/>
    <property type="match status" value="1"/>
</dbReference>
<dbReference type="Pfam" id="PF00370">
    <property type="entry name" value="FGGY_N"/>
    <property type="match status" value="1"/>
</dbReference>
<dbReference type="PIRSF" id="PIRSF000538">
    <property type="entry name" value="GlpK"/>
    <property type="match status" value="1"/>
</dbReference>
<dbReference type="SUPFAM" id="SSF53067">
    <property type="entry name" value="Actin-like ATPase domain"/>
    <property type="match status" value="2"/>
</dbReference>
<dbReference type="PROSITE" id="PS00445">
    <property type="entry name" value="FGGY_KINASES_2"/>
    <property type="match status" value="1"/>
</dbReference>
<keyword id="KW-0067">ATP-binding</keyword>
<keyword id="KW-0319">Glycerol metabolism</keyword>
<keyword id="KW-0418">Kinase</keyword>
<keyword id="KW-0547">Nucleotide-binding</keyword>
<keyword id="KW-1185">Reference proteome</keyword>
<keyword id="KW-0808">Transferase</keyword>
<feature type="chain" id="PRO_0000059526" description="Glycerol kinase">
    <location>
        <begin position="1"/>
        <end position="510"/>
    </location>
</feature>
<feature type="binding site" evidence="1">
    <location>
        <position position="13"/>
    </location>
    <ligand>
        <name>ADP</name>
        <dbReference type="ChEBI" id="CHEBI:456216"/>
    </ligand>
</feature>
<feature type="binding site" evidence="1">
    <location>
        <position position="13"/>
    </location>
    <ligand>
        <name>ATP</name>
        <dbReference type="ChEBI" id="CHEBI:30616"/>
    </ligand>
</feature>
<feature type="binding site" evidence="1">
    <location>
        <position position="13"/>
    </location>
    <ligand>
        <name>sn-glycerol 3-phosphate</name>
        <dbReference type="ChEBI" id="CHEBI:57597"/>
    </ligand>
</feature>
<feature type="binding site" evidence="1">
    <location>
        <position position="14"/>
    </location>
    <ligand>
        <name>ATP</name>
        <dbReference type="ChEBI" id="CHEBI:30616"/>
    </ligand>
</feature>
<feature type="binding site" evidence="1">
    <location>
        <position position="17"/>
    </location>
    <ligand>
        <name>ADP</name>
        <dbReference type="ChEBI" id="CHEBI:456216"/>
    </ligand>
</feature>
<feature type="binding site" evidence="1">
    <location>
        <position position="83"/>
    </location>
    <ligand>
        <name>glycerol</name>
        <dbReference type="ChEBI" id="CHEBI:17754"/>
    </ligand>
</feature>
<feature type="binding site" evidence="1">
    <location>
        <position position="83"/>
    </location>
    <ligand>
        <name>sn-glycerol 3-phosphate</name>
        <dbReference type="ChEBI" id="CHEBI:57597"/>
    </ligand>
</feature>
<feature type="binding site" evidence="1">
    <location>
        <position position="84"/>
    </location>
    <ligand>
        <name>glycerol</name>
        <dbReference type="ChEBI" id="CHEBI:17754"/>
    </ligand>
</feature>
<feature type="binding site" evidence="1">
    <location>
        <position position="84"/>
    </location>
    <ligand>
        <name>sn-glycerol 3-phosphate</name>
        <dbReference type="ChEBI" id="CHEBI:57597"/>
    </ligand>
</feature>
<feature type="binding site" evidence="1">
    <location>
        <position position="135"/>
    </location>
    <ligand>
        <name>glycerol</name>
        <dbReference type="ChEBI" id="CHEBI:17754"/>
    </ligand>
</feature>
<feature type="binding site" evidence="1">
    <location>
        <position position="135"/>
    </location>
    <ligand>
        <name>sn-glycerol 3-phosphate</name>
        <dbReference type="ChEBI" id="CHEBI:57597"/>
    </ligand>
</feature>
<feature type="binding site" evidence="1">
    <location>
        <position position="255"/>
    </location>
    <ligand>
        <name>glycerol</name>
        <dbReference type="ChEBI" id="CHEBI:17754"/>
    </ligand>
</feature>
<feature type="binding site" evidence="1">
    <location>
        <position position="255"/>
    </location>
    <ligand>
        <name>sn-glycerol 3-phosphate</name>
        <dbReference type="ChEBI" id="CHEBI:57597"/>
    </ligand>
</feature>
<feature type="binding site" evidence="1">
    <location>
        <position position="256"/>
    </location>
    <ligand>
        <name>glycerol</name>
        <dbReference type="ChEBI" id="CHEBI:17754"/>
    </ligand>
</feature>
<feature type="binding site" evidence="1">
    <location>
        <position position="277"/>
    </location>
    <ligand>
        <name>ADP</name>
        <dbReference type="ChEBI" id="CHEBI:456216"/>
    </ligand>
</feature>
<feature type="binding site" evidence="1">
    <location>
        <position position="277"/>
    </location>
    <ligand>
        <name>ATP</name>
        <dbReference type="ChEBI" id="CHEBI:30616"/>
    </ligand>
</feature>
<feature type="binding site" evidence="1">
    <location>
        <position position="321"/>
    </location>
    <ligand>
        <name>ADP</name>
        <dbReference type="ChEBI" id="CHEBI:456216"/>
    </ligand>
</feature>
<feature type="binding site" evidence="1">
    <location>
        <position position="321"/>
    </location>
    <ligand>
        <name>ATP</name>
        <dbReference type="ChEBI" id="CHEBI:30616"/>
    </ligand>
</feature>
<feature type="binding site" evidence="1">
    <location>
        <position position="421"/>
    </location>
    <ligand>
        <name>ADP</name>
        <dbReference type="ChEBI" id="CHEBI:456216"/>
    </ligand>
</feature>
<feature type="binding site" evidence="1">
    <location>
        <position position="421"/>
    </location>
    <ligand>
        <name>ATP</name>
        <dbReference type="ChEBI" id="CHEBI:30616"/>
    </ligand>
</feature>
<feature type="binding site" evidence="1">
    <location>
        <position position="425"/>
    </location>
    <ligand>
        <name>ADP</name>
        <dbReference type="ChEBI" id="CHEBI:456216"/>
    </ligand>
</feature>
<gene>
    <name evidence="1" type="primary">glpK</name>
    <name type="ordered locus">rrnAC0550</name>
</gene>
<accession>Q5V4I4</accession>
<evidence type="ECO:0000255" key="1">
    <source>
        <dbReference type="HAMAP-Rule" id="MF_00186"/>
    </source>
</evidence>
<organism>
    <name type="scientific">Haloarcula marismortui (strain ATCC 43049 / DSM 3752 / JCM 8966 / VKM B-1809)</name>
    <name type="common">Halobacterium marismortui</name>
    <dbReference type="NCBI Taxonomy" id="272569"/>
    <lineage>
        <taxon>Archaea</taxon>
        <taxon>Methanobacteriati</taxon>
        <taxon>Methanobacteriota</taxon>
        <taxon>Stenosarchaea group</taxon>
        <taxon>Halobacteria</taxon>
        <taxon>Halobacteriales</taxon>
        <taxon>Haloarculaceae</taxon>
        <taxon>Haloarcula</taxon>
    </lineage>
</organism>
<sequence>MADTYVGAIDQGTTGTRFMVFDHSGQVVANAYEKHEQIYPEPGWVEHDPVEIWENTQEVVTKGLADAGVGAEQLEALGITNQRETTIVWDKETGKPVHNALVWQDRRTTDRVEEIQEEDKVEWIRGKTGLECDAYFSATKTEWILDNAEPLKMQSSRGADLRERAEDGELLMGTIDAWLIYKLTGNHITDVSNASRTMLYNIHDMEWDDELLEEFGVPESMVPEVRPSSDESLYGHTDADGFLKEEVPVAGALGDQQAALFGQTCFDKGDAKNTYGTGAFYLMNTGSEAVASDNGLLTTVGFQMSGEPVQYALEGSIFIAGAAIEWLEDVDLINNAAQTAELARSVESTDGVYMVPAFTGLGAPHWDGRARGTIVGMTRGTRKEHIVRATLESIAYQTRDLAEAMEEDSGVEMTTLRVDGGAVKNNFLCQLQSDIIQTDIARPQVDETTALGSAYAAGLAVGYWDTVDELRDNWQVDEEFSPEMDAGKADKMYARWDDAVDRSRDWAQEE</sequence>
<comment type="function">
    <text evidence="1">Key enzyme in the regulation of glycerol uptake and metabolism. Catalyzes the phosphorylation of glycerol to yield sn-glycerol 3-phosphate.</text>
</comment>
<comment type="catalytic activity">
    <reaction evidence="1">
        <text>glycerol + ATP = sn-glycerol 3-phosphate + ADP + H(+)</text>
        <dbReference type="Rhea" id="RHEA:21644"/>
        <dbReference type="ChEBI" id="CHEBI:15378"/>
        <dbReference type="ChEBI" id="CHEBI:17754"/>
        <dbReference type="ChEBI" id="CHEBI:30616"/>
        <dbReference type="ChEBI" id="CHEBI:57597"/>
        <dbReference type="ChEBI" id="CHEBI:456216"/>
        <dbReference type="EC" id="2.7.1.30"/>
    </reaction>
</comment>
<comment type="pathway">
    <text evidence="1">Polyol metabolism; glycerol degradation via glycerol kinase pathway; sn-glycerol 3-phosphate from glycerol: step 1/1.</text>
</comment>
<comment type="similarity">
    <text evidence="1">Belongs to the FGGY kinase family.</text>
</comment>
<reference key="1">
    <citation type="journal article" date="2004" name="Genome Res.">
        <title>Genome sequence of Haloarcula marismortui: a halophilic archaeon from the Dead Sea.</title>
        <authorList>
            <person name="Baliga N.S."/>
            <person name="Bonneau R."/>
            <person name="Facciotti M.T."/>
            <person name="Pan M."/>
            <person name="Glusman G."/>
            <person name="Deutsch E.W."/>
            <person name="Shannon P."/>
            <person name="Chiu Y."/>
            <person name="Weng R.S."/>
            <person name="Gan R.R."/>
            <person name="Hung P."/>
            <person name="Date S.V."/>
            <person name="Marcotte E."/>
            <person name="Hood L."/>
            <person name="Ng W.V."/>
        </authorList>
    </citation>
    <scope>NUCLEOTIDE SEQUENCE [LARGE SCALE GENOMIC DNA]</scope>
    <source>
        <strain>ATCC 43049 / DSM 3752 / JCM 8966 / VKM B-1809</strain>
    </source>
</reference>
<name>GLPK_HALMA</name>